<reference key="1">
    <citation type="journal article" date="2004" name="Nat. Biotechnol.">
        <title>Complete sequence and comparative genome analysis of the dairy bacterium Streptococcus thermophilus.</title>
        <authorList>
            <person name="Bolotin A."/>
            <person name="Quinquis B."/>
            <person name="Renault P."/>
            <person name="Sorokin A."/>
            <person name="Ehrlich S.D."/>
            <person name="Kulakauskas S."/>
            <person name="Lapidus A."/>
            <person name="Goltsman E."/>
            <person name="Mazur M."/>
            <person name="Pusch G.D."/>
            <person name="Fonstein M."/>
            <person name="Overbeek R."/>
            <person name="Kyprides N."/>
            <person name="Purnelle B."/>
            <person name="Prozzi D."/>
            <person name="Ngui K."/>
            <person name="Masuy D."/>
            <person name="Hancy F."/>
            <person name="Burteau S."/>
            <person name="Boutry M."/>
            <person name="Delcour J."/>
            <person name="Goffeau A."/>
            <person name="Hols P."/>
        </authorList>
    </citation>
    <scope>NUCLEOTIDE SEQUENCE [LARGE SCALE GENOMIC DNA]</scope>
    <source>
        <strain>ATCC BAA-250 / LMG 18311</strain>
    </source>
</reference>
<organism>
    <name type="scientific">Streptococcus thermophilus (strain ATCC BAA-250 / LMG 18311)</name>
    <dbReference type="NCBI Taxonomy" id="264199"/>
    <lineage>
        <taxon>Bacteria</taxon>
        <taxon>Bacillati</taxon>
        <taxon>Bacillota</taxon>
        <taxon>Bacilli</taxon>
        <taxon>Lactobacillales</taxon>
        <taxon>Streptococcaceae</taxon>
        <taxon>Streptococcus</taxon>
    </lineage>
</organism>
<accession>Q5M5A4</accession>
<evidence type="ECO:0000255" key="1">
    <source>
        <dbReference type="HAMAP-Rule" id="MF_01043"/>
    </source>
</evidence>
<sequence>MKILLLILIAYLLGSIQTGLWIGKVFFHTNLREHGSGNTGTTNTFRVLGKTAGTITFLVDMLKGTLAVLLPIWLGVTEVSPLIIGFFAIIGHVFPFFTGFKGGKAVATSAGVLLGFVPLYFVFLLLVFALTLYLTSMISFSSITAAVVGLITLATFPAIHFLLDGYDPIFSAVLIIIALVIIFRHTENIARIRNHRENLVPFGLNLTKQNPNK</sequence>
<feature type="chain" id="PRO_0000188471" description="Glycerol-3-phosphate acyltransferase">
    <location>
        <begin position="1"/>
        <end position="213"/>
    </location>
</feature>
<feature type="transmembrane region" description="Helical" evidence="1">
    <location>
        <begin position="3"/>
        <end position="23"/>
    </location>
</feature>
<feature type="transmembrane region" description="Helical" evidence="1">
    <location>
        <begin position="55"/>
        <end position="75"/>
    </location>
</feature>
<feature type="transmembrane region" description="Helical" evidence="1">
    <location>
        <begin position="80"/>
        <end position="100"/>
    </location>
</feature>
<feature type="transmembrane region" description="Helical" evidence="1">
    <location>
        <begin position="110"/>
        <end position="130"/>
    </location>
</feature>
<feature type="transmembrane region" description="Helical" evidence="1">
    <location>
        <begin position="142"/>
        <end position="162"/>
    </location>
</feature>
<feature type="transmembrane region" description="Helical" evidence="1">
    <location>
        <begin position="163"/>
        <end position="183"/>
    </location>
</feature>
<comment type="function">
    <text evidence="1">Catalyzes the transfer of an acyl group from acyl-phosphate (acyl-PO(4)) to glycerol-3-phosphate (G3P) to form lysophosphatidic acid (LPA). This enzyme utilizes acyl-phosphate as fatty acyl donor, but not acyl-CoA or acyl-ACP.</text>
</comment>
<comment type="catalytic activity">
    <reaction evidence="1">
        <text>an acyl phosphate + sn-glycerol 3-phosphate = a 1-acyl-sn-glycero-3-phosphate + phosphate</text>
        <dbReference type="Rhea" id="RHEA:34075"/>
        <dbReference type="ChEBI" id="CHEBI:43474"/>
        <dbReference type="ChEBI" id="CHEBI:57597"/>
        <dbReference type="ChEBI" id="CHEBI:57970"/>
        <dbReference type="ChEBI" id="CHEBI:59918"/>
        <dbReference type="EC" id="2.3.1.275"/>
    </reaction>
</comment>
<comment type="pathway">
    <text evidence="1">Lipid metabolism; phospholipid metabolism.</text>
</comment>
<comment type="subunit">
    <text evidence="1">Probably interacts with PlsX.</text>
</comment>
<comment type="subcellular location">
    <subcellularLocation>
        <location evidence="1">Cell membrane</location>
        <topology evidence="1">Multi-pass membrane protein</topology>
    </subcellularLocation>
</comment>
<comment type="similarity">
    <text evidence="1">Belongs to the PlsY family.</text>
</comment>
<gene>
    <name evidence="1" type="primary">plsY</name>
    <name type="ordered locus">stu0587</name>
</gene>
<keyword id="KW-1003">Cell membrane</keyword>
<keyword id="KW-0444">Lipid biosynthesis</keyword>
<keyword id="KW-0443">Lipid metabolism</keyword>
<keyword id="KW-0472">Membrane</keyword>
<keyword id="KW-0594">Phospholipid biosynthesis</keyword>
<keyword id="KW-1208">Phospholipid metabolism</keyword>
<keyword id="KW-1185">Reference proteome</keyword>
<keyword id="KW-0808">Transferase</keyword>
<keyword id="KW-0812">Transmembrane</keyword>
<keyword id="KW-1133">Transmembrane helix</keyword>
<dbReference type="EC" id="2.3.1.275" evidence="1"/>
<dbReference type="EMBL" id="CP000023">
    <property type="protein sequence ID" value="AAV60293.1"/>
    <property type="molecule type" value="Genomic_DNA"/>
</dbReference>
<dbReference type="RefSeq" id="WP_002950167.1">
    <property type="nucleotide sequence ID" value="NC_006448.1"/>
</dbReference>
<dbReference type="SMR" id="Q5M5A4"/>
<dbReference type="STRING" id="264199.stu0587"/>
<dbReference type="GeneID" id="66898491"/>
<dbReference type="KEGG" id="stl:stu0587"/>
<dbReference type="eggNOG" id="COG0344">
    <property type="taxonomic scope" value="Bacteria"/>
</dbReference>
<dbReference type="HOGENOM" id="CLU_081254_0_0_9"/>
<dbReference type="UniPathway" id="UPA00085"/>
<dbReference type="Proteomes" id="UP000001170">
    <property type="component" value="Chromosome"/>
</dbReference>
<dbReference type="GO" id="GO:0005886">
    <property type="term" value="C:plasma membrane"/>
    <property type="evidence" value="ECO:0007669"/>
    <property type="project" value="UniProtKB-SubCell"/>
</dbReference>
<dbReference type="GO" id="GO:0043772">
    <property type="term" value="F:acyl-phosphate glycerol-3-phosphate acyltransferase activity"/>
    <property type="evidence" value="ECO:0007669"/>
    <property type="project" value="UniProtKB-UniRule"/>
</dbReference>
<dbReference type="GO" id="GO:0008654">
    <property type="term" value="P:phospholipid biosynthetic process"/>
    <property type="evidence" value="ECO:0007669"/>
    <property type="project" value="UniProtKB-UniRule"/>
</dbReference>
<dbReference type="HAMAP" id="MF_01043">
    <property type="entry name" value="PlsY"/>
    <property type="match status" value="1"/>
</dbReference>
<dbReference type="InterPro" id="IPR003811">
    <property type="entry name" value="G3P_acylTferase_PlsY"/>
</dbReference>
<dbReference type="NCBIfam" id="TIGR00023">
    <property type="entry name" value="glycerol-3-phosphate 1-O-acyltransferase PlsY"/>
    <property type="match status" value="1"/>
</dbReference>
<dbReference type="PANTHER" id="PTHR30309:SF0">
    <property type="entry name" value="GLYCEROL-3-PHOSPHATE ACYLTRANSFERASE-RELATED"/>
    <property type="match status" value="1"/>
</dbReference>
<dbReference type="PANTHER" id="PTHR30309">
    <property type="entry name" value="INNER MEMBRANE PROTEIN YGIH"/>
    <property type="match status" value="1"/>
</dbReference>
<dbReference type="Pfam" id="PF02660">
    <property type="entry name" value="G3P_acyltransf"/>
    <property type="match status" value="1"/>
</dbReference>
<dbReference type="SMART" id="SM01207">
    <property type="entry name" value="G3P_acyltransf"/>
    <property type="match status" value="1"/>
</dbReference>
<name>PLSY_STRT2</name>
<protein>
    <recommendedName>
        <fullName evidence="1">Glycerol-3-phosphate acyltransferase</fullName>
    </recommendedName>
    <alternativeName>
        <fullName evidence="1">Acyl-PO4 G3P acyltransferase</fullName>
    </alternativeName>
    <alternativeName>
        <fullName evidence="1">Acyl-phosphate--glycerol-3-phosphate acyltransferase</fullName>
    </alternativeName>
    <alternativeName>
        <fullName evidence="1">G3P acyltransferase</fullName>
        <shortName evidence="1">GPAT</shortName>
        <ecNumber evidence="1">2.3.1.275</ecNumber>
    </alternativeName>
    <alternativeName>
        <fullName evidence="1">Lysophosphatidic acid synthase</fullName>
        <shortName evidence="1">LPA synthase</shortName>
    </alternativeName>
</protein>
<proteinExistence type="inferred from homology"/>